<protein>
    <recommendedName>
        <fullName evidence="1">Nucleoid-associated protein XOO0965</fullName>
    </recommendedName>
</protein>
<reference key="1">
    <citation type="journal article" date="2005" name="Jpn. Agric. Res. Q.">
        <title>Genome sequence of Xanthomonas oryzae pv. oryzae suggests contribution of large numbers of effector genes and insertion sequences to its race diversity.</title>
        <authorList>
            <person name="Ochiai H."/>
            <person name="Inoue Y."/>
            <person name="Takeya M."/>
            <person name="Sasaki A."/>
            <person name="Kaku H."/>
        </authorList>
    </citation>
    <scope>NUCLEOTIDE SEQUENCE [LARGE SCALE GENOMIC DNA]</scope>
    <source>
        <strain>MAFF 311018</strain>
    </source>
</reference>
<evidence type="ECO:0000255" key="1">
    <source>
        <dbReference type="HAMAP-Rule" id="MF_00274"/>
    </source>
</evidence>
<evidence type="ECO:0000256" key="2">
    <source>
        <dbReference type="SAM" id="MobiDB-lite"/>
    </source>
</evidence>
<feature type="chain" id="PRO_1000003868" description="Nucleoid-associated protein XOO0965">
    <location>
        <begin position="1"/>
        <end position="106"/>
    </location>
</feature>
<feature type="region of interest" description="Disordered" evidence="2">
    <location>
        <begin position="80"/>
        <end position="106"/>
    </location>
</feature>
<feature type="compositionally biased region" description="Basic and acidic residues" evidence="2">
    <location>
        <begin position="80"/>
        <end position="89"/>
    </location>
</feature>
<name>Y965_XANOM</name>
<sequence>MRGNIAQLMQQAQKMQENLQRAQEELAKLEVTGTAGGGMVNVTLTGAKECRKVRIDPSILSDQEMAEDLIAAAFNDASNKIDAESKDRMGSATAGMQLPPGMKLPF</sequence>
<gene>
    <name type="ordered locus">XOO0965</name>
</gene>
<keyword id="KW-0963">Cytoplasm</keyword>
<keyword id="KW-0238">DNA-binding</keyword>
<proteinExistence type="inferred from homology"/>
<comment type="function">
    <text evidence="1">Binds to DNA and alters its conformation. May be involved in regulation of gene expression, nucleoid organization and DNA protection.</text>
</comment>
<comment type="subunit">
    <text evidence="1">Homodimer.</text>
</comment>
<comment type="subcellular location">
    <subcellularLocation>
        <location evidence="1">Cytoplasm</location>
        <location evidence="1">Nucleoid</location>
    </subcellularLocation>
</comment>
<comment type="similarity">
    <text evidence="1">Belongs to the YbaB/EbfC family.</text>
</comment>
<dbReference type="EMBL" id="AP008229">
    <property type="protein sequence ID" value="BAE67720.1"/>
    <property type="molecule type" value="Genomic_DNA"/>
</dbReference>
<dbReference type="RefSeq" id="WP_011257912.1">
    <property type="nucleotide sequence ID" value="NC_007705.1"/>
</dbReference>
<dbReference type="SMR" id="Q2P6V7"/>
<dbReference type="KEGG" id="xom:XOO0965"/>
<dbReference type="HOGENOM" id="CLU_140930_0_0_6"/>
<dbReference type="GO" id="GO:0043590">
    <property type="term" value="C:bacterial nucleoid"/>
    <property type="evidence" value="ECO:0007669"/>
    <property type="project" value="UniProtKB-UniRule"/>
</dbReference>
<dbReference type="GO" id="GO:0005829">
    <property type="term" value="C:cytosol"/>
    <property type="evidence" value="ECO:0007669"/>
    <property type="project" value="TreeGrafter"/>
</dbReference>
<dbReference type="GO" id="GO:0003677">
    <property type="term" value="F:DNA binding"/>
    <property type="evidence" value="ECO:0007669"/>
    <property type="project" value="UniProtKB-UniRule"/>
</dbReference>
<dbReference type="FunFam" id="3.30.1310.10:FF:000001">
    <property type="entry name" value="Nucleoid-associated protein YbaB"/>
    <property type="match status" value="1"/>
</dbReference>
<dbReference type="Gene3D" id="3.30.1310.10">
    <property type="entry name" value="Nucleoid-associated protein YbaB-like domain"/>
    <property type="match status" value="1"/>
</dbReference>
<dbReference type="HAMAP" id="MF_00274">
    <property type="entry name" value="DNA_YbaB_EbfC"/>
    <property type="match status" value="1"/>
</dbReference>
<dbReference type="InterPro" id="IPR036894">
    <property type="entry name" value="YbaB-like_sf"/>
</dbReference>
<dbReference type="InterPro" id="IPR004401">
    <property type="entry name" value="YbaB/EbfC"/>
</dbReference>
<dbReference type="NCBIfam" id="TIGR00103">
    <property type="entry name" value="DNA_YbaB_EbfC"/>
    <property type="match status" value="1"/>
</dbReference>
<dbReference type="PANTHER" id="PTHR33449">
    <property type="entry name" value="NUCLEOID-ASSOCIATED PROTEIN YBAB"/>
    <property type="match status" value="1"/>
</dbReference>
<dbReference type="PANTHER" id="PTHR33449:SF1">
    <property type="entry name" value="NUCLEOID-ASSOCIATED PROTEIN YBAB"/>
    <property type="match status" value="1"/>
</dbReference>
<dbReference type="Pfam" id="PF02575">
    <property type="entry name" value="YbaB_DNA_bd"/>
    <property type="match status" value="1"/>
</dbReference>
<dbReference type="PIRSF" id="PIRSF004555">
    <property type="entry name" value="UCP004555"/>
    <property type="match status" value="1"/>
</dbReference>
<dbReference type="SUPFAM" id="SSF82607">
    <property type="entry name" value="YbaB-like"/>
    <property type="match status" value="1"/>
</dbReference>
<organism>
    <name type="scientific">Xanthomonas oryzae pv. oryzae (strain MAFF 311018)</name>
    <dbReference type="NCBI Taxonomy" id="342109"/>
    <lineage>
        <taxon>Bacteria</taxon>
        <taxon>Pseudomonadati</taxon>
        <taxon>Pseudomonadota</taxon>
        <taxon>Gammaproteobacteria</taxon>
        <taxon>Lysobacterales</taxon>
        <taxon>Lysobacteraceae</taxon>
        <taxon>Xanthomonas</taxon>
    </lineage>
</organism>
<accession>Q2P6V7</accession>